<accession>Q5B7I9</accession>
<accession>C8V550</accession>
<gene>
    <name evidence="6" type="primary">inpD</name>
    <name type="ORF">ANIA_03491</name>
</gene>
<reference key="1">
    <citation type="journal article" date="2005" name="Nature">
        <title>Sequencing of Aspergillus nidulans and comparative analysis with A. fumigatus and A. oryzae.</title>
        <authorList>
            <person name="Galagan J.E."/>
            <person name="Calvo S.E."/>
            <person name="Cuomo C."/>
            <person name="Ma L.-J."/>
            <person name="Wortman J.R."/>
            <person name="Batzoglou S."/>
            <person name="Lee S.-I."/>
            <person name="Bastuerkmen M."/>
            <person name="Spevak C.C."/>
            <person name="Clutterbuck J."/>
            <person name="Kapitonov V."/>
            <person name="Jurka J."/>
            <person name="Scazzocchio C."/>
            <person name="Farman M.L."/>
            <person name="Butler J."/>
            <person name="Purcell S."/>
            <person name="Harris S."/>
            <person name="Braus G.H."/>
            <person name="Draht O."/>
            <person name="Busch S."/>
            <person name="D'Enfert C."/>
            <person name="Bouchier C."/>
            <person name="Goldman G.H."/>
            <person name="Bell-Pedersen D."/>
            <person name="Griffiths-Jones S."/>
            <person name="Doonan J.H."/>
            <person name="Yu J."/>
            <person name="Vienken K."/>
            <person name="Pain A."/>
            <person name="Freitag M."/>
            <person name="Selker E.U."/>
            <person name="Archer D.B."/>
            <person name="Penalva M.A."/>
            <person name="Oakley B.R."/>
            <person name="Momany M."/>
            <person name="Tanaka T."/>
            <person name="Kumagai T."/>
            <person name="Asai K."/>
            <person name="Machida M."/>
            <person name="Nierman W.C."/>
            <person name="Denning D.W."/>
            <person name="Caddick M.X."/>
            <person name="Hynes M."/>
            <person name="Paoletti M."/>
            <person name="Fischer R."/>
            <person name="Miller B.L."/>
            <person name="Dyer P.S."/>
            <person name="Sachs M.S."/>
            <person name="Osmani S.A."/>
            <person name="Birren B.W."/>
        </authorList>
    </citation>
    <scope>NUCLEOTIDE SEQUENCE [LARGE SCALE GENOMIC DNA]</scope>
    <source>
        <strain>FGSC A4 / ATCC 38163 / CBS 112.46 / NRRL 194 / M139</strain>
    </source>
</reference>
<reference key="2">
    <citation type="journal article" date="2009" name="Fungal Genet. Biol.">
        <title>The 2008 update of the Aspergillus nidulans genome annotation: a community effort.</title>
        <authorList>
            <person name="Wortman J.R."/>
            <person name="Gilsenan J.M."/>
            <person name="Joardar V."/>
            <person name="Deegan J."/>
            <person name="Clutterbuck J."/>
            <person name="Andersen M.R."/>
            <person name="Archer D."/>
            <person name="Bencina M."/>
            <person name="Braus G."/>
            <person name="Coutinho P."/>
            <person name="von Dohren H."/>
            <person name="Doonan J."/>
            <person name="Driessen A.J."/>
            <person name="Durek P."/>
            <person name="Espeso E."/>
            <person name="Fekete E."/>
            <person name="Flipphi M."/>
            <person name="Estrada C.G."/>
            <person name="Geysens S."/>
            <person name="Goldman G."/>
            <person name="de Groot P.W."/>
            <person name="Hansen K."/>
            <person name="Harris S.D."/>
            <person name="Heinekamp T."/>
            <person name="Helmstaedt K."/>
            <person name="Henrissat B."/>
            <person name="Hofmann G."/>
            <person name="Homan T."/>
            <person name="Horio T."/>
            <person name="Horiuchi H."/>
            <person name="James S."/>
            <person name="Jones M."/>
            <person name="Karaffa L."/>
            <person name="Karanyi Z."/>
            <person name="Kato M."/>
            <person name="Keller N."/>
            <person name="Kelly D.E."/>
            <person name="Kiel J.A."/>
            <person name="Kim J.M."/>
            <person name="van der Klei I.J."/>
            <person name="Klis F.M."/>
            <person name="Kovalchuk A."/>
            <person name="Krasevec N."/>
            <person name="Kubicek C.P."/>
            <person name="Liu B."/>
            <person name="Maccabe A."/>
            <person name="Meyer V."/>
            <person name="Mirabito P."/>
            <person name="Miskei M."/>
            <person name="Mos M."/>
            <person name="Mullins J."/>
            <person name="Nelson D.R."/>
            <person name="Nielsen J."/>
            <person name="Oakley B.R."/>
            <person name="Osmani S.A."/>
            <person name="Pakula T."/>
            <person name="Paszewski A."/>
            <person name="Paulsen I."/>
            <person name="Pilsyk S."/>
            <person name="Pocsi I."/>
            <person name="Punt P.J."/>
            <person name="Ram A.F."/>
            <person name="Ren Q."/>
            <person name="Robellet X."/>
            <person name="Robson G."/>
            <person name="Seiboth B."/>
            <person name="van Solingen P."/>
            <person name="Specht T."/>
            <person name="Sun J."/>
            <person name="Taheri-Talesh N."/>
            <person name="Takeshita N."/>
            <person name="Ussery D."/>
            <person name="vanKuyk P.A."/>
            <person name="Visser H."/>
            <person name="van de Vondervoort P.J."/>
            <person name="de Vries R.P."/>
            <person name="Walton J."/>
            <person name="Xiang X."/>
            <person name="Xiong Y."/>
            <person name="Zeng A.P."/>
            <person name="Brandt B.W."/>
            <person name="Cornell M.J."/>
            <person name="van den Hondel C.A."/>
            <person name="Visser J."/>
            <person name="Oliver S.G."/>
            <person name="Turner G."/>
        </authorList>
    </citation>
    <scope>GENOME REANNOTATION</scope>
    <source>
        <strain>FGSC A4 / ATCC 38163 / CBS 112.46 / NRRL 194 / M139</strain>
    </source>
</reference>
<reference key="3">
    <citation type="journal article" date="2010" name="Appl. Environ. Microbiol.">
        <title>Activation of a silent fungal polyketide biosynthesis pathway through regulatory cross talk with a cryptic nonribosomal peptide synthetase gene cluster.</title>
        <authorList>
            <person name="Bergmann S."/>
            <person name="Funk A.N."/>
            <person name="Scherlach K."/>
            <person name="Schroeckh V."/>
            <person name="Shelest E."/>
            <person name="Horn U."/>
            <person name="Hertweck C."/>
            <person name="Brakhage A.A."/>
        </authorList>
    </citation>
    <scope>IDENTIFICATION</scope>
    <scope>INDUCTION</scope>
</reference>
<reference key="4">
    <citation type="journal article" date="2016" name="ACS Chem. Biol.">
        <title>Resistance gene-guided genome mining: serial promoter exchanges in Aspergillus nidulans reveal the biosynthetic pathway for fellutamide B, a proteasome inhibitor.</title>
        <authorList>
            <person name="Yeh H.H."/>
            <person name="Ahuja M."/>
            <person name="Chiang Y.M."/>
            <person name="Oakley C.E."/>
            <person name="Moore S."/>
            <person name="Yoon O."/>
            <person name="Hajovsky H."/>
            <person name="Bok J.W."/>
            <person name="Keller N.P."/>
            <person name="Wang C.C."/>
            <person name="Oakley B.R."/>
        </authorList>
    </citation>
    <scope>FUNCTION</scope>
    <scope>DISRUPTION PHENOTYPE</scope>
</reference>
<evidence type="ECO:0000255" key="1"/>
<evidence type="ECO:0000255" key="2">
    <source>
        <dbReference type="PROSITE-ProRule" id="PRU00498"/>
    </source>
</evidence>
<evidence type="ECO:0000256" key="3">
    <source>
        <dbReference type="SAM" id="MobiDB-lite"/>
    </source>
</evidence>
<evidence type="ECO:0000269" key="4">
    <source>
    </source>
</evidence>
<evidence type="ECO:0000269" key="5">
    <source>
    </source>
</evidence>
<evidence type="ECO:0000303" key="6">
    <source>
    </source>
</evidence>
<evidence type="ECO:0000303" key="7">
    <source>
    </source>
</evidence>
<evidence type="ECO:0000305" key="8"/>
<evidence type="ECO:0000305" key="9">
    <source>
    </source>
</evidence>
<sequence length="517" mass="56019">MEKTQTPSLTPDELSARSSTPFEEREEEEEVHYVGHLKFSFIFVGLCLSVFQVALSLQDIGWYGSAYLFTDCAFQLVFGRLYSMLPVKIVYLGALLLFEIGSIICATAPNSIALILGRTIAGIGAGGILSGALTILSQSVPRAKVAVFNGILGAVNGIAFICGPLLAGGIINGTTWRWIFYINPIISAPTFFITVFLLKLDPPKTNVKTWRGRIAMLDLPAFTLFLGSILCLILALLWGGKEYSWKNARIIVLFILFGVIMLAFMLVQKRKGDDALVPMRILCQRSIAFGMFFSFCTSGTGFILEYYLPIWLQVIKDLSVISSAVKLLPIIAAAVVFTTLCGILTPVIGHYVPFMIIATMLLSVGMGLLSTLEYTSPIRHVLGFQVPAGVGLGCALQQTLVAAQTILPMNDIPIGVSLIVLAQTLGGTIALSAADTIYTGTLSSSISSRFPQINRETVLTTGNREIRNLVPAESLSVIMDLCNKAIVKTWYLSIGLAAASIIGVLGMEWRRVTPPKK</sequence>
<feature type="chain" id="PRO_0000444111" description="MFS efflux transporter inpD">
    <location>
        <begin position="1"/>
        <end position="517"/>
    </location>
</feature>
<feature type="transmembrane region" description="Helical" evidence="1">
    <location>
        <begin position="37"/>
        <end position="57"/>
    </location>
</feature>
<feature type="transmembrane region" description="Helical" evidence="1">
    <location>
        <begin position="59"/>
        <end position="79"/>
    </location>
</feature>
<feature type="transmembrane region" description="Helical" evidence="1">
    <location>
        <begin position="89"/>
        <end position="109"/>
    </location>
</feature>
<feature type="transmembrane region" description="Helical" evidence="1">
    <location>
        <begin position="112"/>
        <end position="132"/>
    </location>
</feature>
<feature type="transmembrane region" description="Helical" evidence="1">
    <location>
        <begin position="151"/>
        <end position="171"/>
    </location>
</feature>
<feature type="transmembrane region" description="Helical" evidence="1">
    <location>
        <begin position="178"/>
        <end position="198"/>
    </location>
</feature>
<feature type="transmembrane region" description="Helical" evidence="1">
    <location>
        <begin position="219"/>
        <end position="239"/>
    </location>
</feature>
<feature type="transmembrane region" description="Helical" evidence="1">
    <location>
        <begin position="247"/>
        <end position="267"/>
    </location>
</feature>
<feature type="transmembrane region" description="Helical" evidence="1">
    <location>
        <begin position="292"/>
        <end position="312"/>
    </location>
</feature>
<feature type="transmembrane region" description="Helical" evidence="1">
    <location>
        <begin position="328"/>
        <end position="348"/>
    </location>
</feature>
<feature type="transmembrane region" description="Helical" evidence="1">
    <location>
        <begin position="352"/>
        <end position="372"/>
    </location>
</feature>
<feature type="transmembrane region" description="Helical" evidence="1">
    <location>
        <begin position="381"/>
        <end position="401"/>
    </location>
</feature>
<feature type="transmembrane region" description="Helical" evidence="1">
    <location>
        <begin position="412"/>
        <end position="432"/>
    </location>
</feature>
<feature type="transmembrane region" description="Helical" evidence="1">
    <location>
        <begin position="485"/>
        <end position="505"/>
    </location>
</feature>
<feature type="region of interest" description="Disordered" evidence="3">
    <location>
        <begin position="1"/>
        <end position="24"/>
    </location>
</feature>
<feature type="glycosylation site" description="N-linked (GlcNAc...) asparagine" evidence="2">
    <location>
        <position position="172"/>
    </location>
</feature>
<dbReference type="EMBL" id="BN001302">
    <property type="protein sequence ID" value="CBF76046.1"/>
    <property type="molecule type" value="Genomic_DNA"/>
</dbReference>
<dbReference type="RefSeq" id="XP_661095.1">
    <property type="nucleotide sequence ID" value="XM_656003.1"/>
</dbReference>
<dbReference type="SMR" id="Q5B7I9"/>
<dbReference type="STRING" id="227321.Q5B7I9"/>
<dbReference type="GlyCosmos" id="Q5B7I9">
    <property type="glycosylation" value="1 site, No reported glycans"/>
</dbReference>
<dbReference type="EnsemblFungi" id="CBF76046">
    <property type="protein sequence ID" value="CBF76046"/>
    <property type="gene ID" value="ANIA_03491"/>
</dbReference>
<dbReference type="GeneID" id="2872912"/>
<dbReference type="KEGG" id="ani:ANIA_03491"/>
<dbReference type="eggNOG" id="KOG0254">
    <property type="taxonomic scope" value="Eukaryota"/>
</dbReference>
<dbReference type="HOGENOM" id="CLU_000960_22_1_1"/>
<dbReference type="InParanoid" id="Q5B7I9"/>
<dbReference type="OMA" id="TILPMND"/>
<dbReference type="OrthoDB" id="2985014at2759"/>
<dbReference type="Proteomes" id="UP000000560">
    <property type="component" value="Chromosome II"/>
</dbReference>
<dbReference type="GO" id="GO:0005886">
    <property type="term" value="C:plasma membrane"/>
    <property type="evidence" value="ECO:0000318"/>
    <property type="project" value="GO_Central"/>
</dbReference>
<dbReference type="GO" id="GO:0022857">
    <property type="term" value="F:transmembrane transporter activity"/>
    <property type="evidence" value="ECO:0000318"/>
    <property type="project" value="GO_Central"/>
</dbReference>
<dbReference type="GO" id="GO:0055085">
    <property type="term" value="P:transmembrane transport"/>
    <property type="evidence" value="ECO:0000318"/>
    <property type="project" value="GO_Central"/>
</dbReference>
<dbReference type="Gene3D" id="1.20.1250.20">
    <property type="entry name" value="MFS general substrate transporter like domains"/>
    <property type="match status" value="1"/>
</dbReference>
<dbReference type="InterPro" id="IPR011701">
    <property type="entry name" value="MFS"/>
</dbReference>
<dbReference type="InterPro" id="IPR020846">
    <property type="entry name" value="MFS_dom"/>
</dbReference>
<dbReference type="InterPro" id="IPR036259">
    <property type="entry name" value="MFS_trans_sf"/>
</dbReference>
<dbReference type="PANTHER" id="PTHR23501">
    <property type="entry name" value="MAJOR FACILITATOR SUPERFAMILY"/>
    <property type="match status" value="1"/>
</dbReference>
<dbReference type="PANTHER" id="PTHR23501:SF199">
    <property type="entry name" value="MFS EFFLUX TRANSPORTER INPD-RELATED"/>
    <property type="match status" value="1"/>
</dbReference>
<dbReference type="Pfam" id="PF07690">
    <property type="entry name" value="MFS_1"/>
    <property type="match status" value="1"/>
</dbReference>
<dbReference type="SUPFAM" id="SSF103473">
    <property type="entry name" value="MFS general substrate transporter"/>
    <property type="match status" value="1"/>
</dbReference>
<dbReference type="PROSITE" id="PS50850">
    <property type="entry name" value="MFS"/>
    <property type="match status" value="1"/>
</dbReference>
<keyword id="KW-1003">Cell membrane</keyword>
<keyword id="KW-0325">Glycoprotein</keyword>
<keyword id="KW-0472">Membrane</keyword>
<keyword id="KW-1185">Reference proteome</keyword>
<keyword id="KW-0812">Transmembrane</keyword>
<keyword id="KW-1133">Transmembrane helix</keyword>
<keyword id="KW-0813">Transport</keyword>
<comment type="function">
    <text evidence="5 9">MFS efflux transporter; part of the inp gene cluster that mediates the biosynthesis of fellutamide B, a mycotoxin that acts as a proteasome inhibitor (PubMed:20952652, PubMed:27294372). In the first step of fellutabmide B biosynthesis inpC activates 3-hydroxydodecanoic acid to generate 3-hydroxydodecanoyl-AMP that is then loaded onto the T0 domain of inpB (PubMed:27294372). The 3-hydroxydodecanoyl-S-phosphopantetheinyl-T0 is sequentially extended with L-Asn and L-Gln by the two CAT modules of inpB (PubMed:27294372). The linear lipodipeptide from inpB is then transferred onto inpA for the addition of the third amino acid, L-Leu (PubMed:27294372). Reductive releasing of the lipotripeptide by the TE domain of inpA produces (2S)-fellutamide B (PubMed:27294372). InpF might be involved in the release and transfer of the lipodipeptide from inpB to inpA (PubMed:27294372). The inp cluster-encoded proteasome subunit inpE confers resistance to internally produced fellutamides (PubMed:27294372). The MFS efflux transporter inpD may contribute to fellutamide resistance as well (PubMed:27294372).</text>
</comment>
<comment type="subcellular location">
    <subcellularLocation>
        <location evidence="8">Cell membrane</location>
        <topology evidence="1">Multi-pass membrane protein</topology>
    </subcellularLocation>
</comment>
<comment type="induction">
    <text evidence="4">Expression is positively regulated by the secondary metabolism cross-pathway regulator scpR (PubMed:20952652).</text>
</comment>
<comment type="disruption phenotype">
    <text evidence="5">Does not affect production of fellutamides (PubMed:27294372).</text>
</comment>
<comment type="similarity">
    <text evidence="8">Belongs to the major facilitator superfamily.</text>
</comment>
<protein>
    <recommendedName>
        <fullName evidence="8">MFS efflux transporter inpD</fullName>
    </recommendedName>
    <alternativeName>
        <fullName evidence="7">Fellutamide B biosynthesis cluster protein D</fullName>
    </alternativeName>
    <alternativeName>
        <fullName evidence="6">Inp cluster protein D</fullName>
    </alternativeName>
</protein>
<organism>
    <name type="scientific">Emericella nidulans (strain FGSC A4 / ATCC 38163 / CBS 112.46 / NRRL 194 / M139)</name>
    <name type="common">Aspergillus nidulans</name>
    <dbReference type="NCBI Taxonomy" id="227321"/>
    <lineage>
        <taxon>Eukaryota</taxon>
        <taxon>Fungi</taxon>
        <taxon>Dikarya</taxon>
        <taxon>Ascomycota</taxon>
        <taxon>Pezizomycotina</taxon>
        <taxon>Eurotiomycetes</taxon>
        <taxon>Eurotiomycetidae</taxon>
        <taxon>Eurotiales</taxon>
        <taxon>Aspergillaceae</taxon>
        <taxon>Aspergillus</taxon>
        <taxon>Aspergillus subgen. Nidulantes</taxon>
    </lineage>
</organism>
<name>INPD_EMENI</name>
<proteinExistence type="evidence at transcript level"/>